<sequence length="194" mass="20815">MSQIKLIVGLANSGTKYEDTRHNAGEWLINEIARQFNVSLKEEAKFFGKVAKINAAGGEVRLLVPTTFMNLSGKAVGALANFYRIKPEEILVAHDELDLPPGVAKIKQGGGHGGHNGLKDIIASLGNSNNFYRVRIGIGHPGSKELVAGYVLGKPSPQDQEKINAAVDEAGRCVDLLLKDGITKATNRLNAFKA</sequence>
<accession>B0BRJ2</accession>
<protein>
    <recommendedName>
        <fullName evidence="1">Peptidyl-tRNA hydrolase</fullName>
        <shortName evidence="1">Pth</shortName>
        <ecNumber evidence="1">3.1.1.29</ecNumber>
    </recommendedName>
</protein>
<dbReference type="EC" id="3.1.1.29" evidence="1"/>
<dbReference type="EMBL" id="CP000687">
    <property type="protein sequence ID" value="ABY68640.1"/>
    <property type="molecule type" value="Genomic_DNA"/>
</dbReference>
<dbReference type="RefSeq" id="WP_005599985.1">
    <property type="nucleotide sequence ID" value="NC_010278.1"/>
</dbReference>
<dbReference type="SMR" id="B0BRJ2"/>
<dbReference type="KEGG" id="apj:APJL_0034"/>
<dbReference type="HOGENOM" id="CLU_062456_3_1_6"/>
<dbReference type="Proteomes" id="UP000008547">
    <property type="component" value="Chromosome"/>
</dbReference>
<dbReference type="GO" id="GO:0005737">
    <property type="term" value="C:cytoplasm"/>
    <property type="evidence" value="ECO:0007669"/>
    <property type="project" value="UniProtKB-SubCell"/>
</dbReference>
<dbReference type="GO" id="GO:0004045">
    <property type="term" value="F:peptidyl-tRNA hydrolase activity"/>
    <property type="evidence" value="ECO:0007669"/>
    <property type="project" value="UniProtKB-UniRule"/>
</dbReference>
<dbReference type="GO" id="GO:0000049">
    <property type="term" value="F:tRNA binding"/>
    <property type="evidence" value="ECO:0007669"/>
    <property type="project" value="UniProtKB-UniRule"/>
</dbReference>
<dbReference type="GO" id="GO:0006515">
    <property type="term" value="P:protein quality control for misfolded or incompletely synthesized proteins"/>
    <property type="evidence" value="ECO:0007669"/>
    <property type="project" value="UniProtKB-UniRule"/>
</dbReference>
<dbReference type="GO" id="GO:0072344">
    <property type="term" value="P:rescue of stalled ribosome"/>
    <property type="evidence" value="ECO:0007669"/>
    <property type="project" value="UniProtKB-UniRule"/>
</dbReference>
<dbReference type="CDD" id="cd00462">
    <property type="entry name" value="PTH"/>
    <property type="match status" value="1"/>
</dbReference>
<dbReference type="FunFam" id="3.40.50.1470:FF:000001">
    <property type="entry name" value="Peptidyl-tRNA hydrolase"/>
    <property type="match status" value="1"/>
</dbReference>
<dbReference type="Gene3D" id="3.40.50.1470">
    <property type="entry name" value="Peptidyl-tRNA hydrolase"/>
    <property type="match status" value="1"/>
</dbReference>
<dbReference type="HAMAP" id="MF_00083">
    <property type="entry name" value="Pept_tRNA_hydro_bact"/>
    <property type="match status" value="1"/>
</dbReference>
<dbReference type="InterPro" id="IPR001328">
    <property type="entry name" value="Pept_tRNA_hydro"/>
</dbReference>
<dbReference type="InterPro" id="IPR018171">
    <property type="entry name" value="Pept_tRNA_hydro_CS"/>
</dbReference>
<dbReference type="InterPro" id="IPR036416">
    <property type="entry name" value="Pept_tRNA_hydro_sf"/>
</dbReference>
<dbReference type="NCBIfam" id="TIGR00447">
    <property type="entry name" value="pth"/>
    <property type="match status" value="1"/>
</dbReference>
<dbReference type="PANTHER" id="PTHR17224">
    <property type="entry name" value="PEPTIDYL-TRNA HYDROLASE"/>
    <property type="match status" value="1"/>
</dbReference>
<dbReference type="PANTHER" id="PTHR17224:SF1">
    <property type="entry name" value="PEPTIDYL-TRNA HYDROLASE"/>
    <property type="match status" value="1"/>
</dbReference>
<dbReference type="Pfam" id="PF01195">
    <property type="entry name" value="Pept_tRNA_hydro"/>
    <property type="match status" value="1"/>
</dbReference>
<dbReference type="SUPFAM" id="SSF53178">
    <property type="entry name" value="Peptidyl-tRNA hydrolase-like"/>
    <property type="match status" value="1"/>
</dbReference>
<dbReference type="PROSITE" id="PS01195">
    <property type="entry name" value="PEPT_TRNA_HYDROL_1"/>
    <property type="match status" value="1"/>
</dbReference>
<dbReference type="PROSITE" id="PS01196">
    <property type="entry name" value="PEPT_TRNA_HYDROL_2"/>
    <property type="match status" value="1"/>
</dbReference>
<reference key="1">
    <citation type="journal article" date="2008" name="PLoS ONE">
        <title>Genome biology of Actinobacillus pleuropneumoniae JL03, an isolate of serotype 3 prevalent in China.</title>
        <authorList>
            <person name="Xu Z."/>
            <person name="Zhou Y."/>
            <person name="Li L."/>
            <person name="Zhou R."/>
            <person name="Xiao S."/>
            <person name="Wan Y."/>
            <person name="Zhang S."/>
            <person name="Wang K."/>
            <person name="Li W."/>
            <person name="Li L."/>
            <person name="Jin H."/>
            <person name="Kang M."/>
            <person name="Dalai B."/>
            <person name="Li T."/>
            <person name="Liu L."/>
            <person name="Cheng Y."/>
            <person name="Zhang L."/>
            <person name="Xu T."/>
            <person name="Zheng H."/>
            <person name="Pu S."/>
            <person name="Wang B."/>
            <person name="Gu W."/>
            <person name="Zhang X.L."/>
            <person name="Zhu G.-F."/>
            <person name="Wang S."/>
            <person name="Zhao G.-P."/>
            <person name="Chen H."/>
        </authorList>
    </citation>
    <scope>NUCLEOTIDE SEQUENCE [LARGE SCALE GENOMIC DNA]</scope>
    <source>
        <strain>JL03</strain>
    </source>
</reference>
<comment type="function">
    <text evidence="1">Hydrolyzes ribosome-free peptidyl-tRNAs (with 1 or more amino acids incorporated), which drop off the ribosome during protein synthesis, or as a result of ribosome stalling.</text>
</comment>
<comment type="function">
    <text evidence="1">Catalyzes the release of premature peptidyl moieties from peptidyl-tRNA molecules trapped in stalled 50S ribosomal subunits, and thus maintains levels of free tRNAs and 50S ribosomes.</text>
</comment>
<comment type="catalytic activity">
    <reaction evidence="1">
        <text>an N-acyl-L-alpha-aminoacyl-tRNA + H2O = an N-acyl-L-amino acid + a tRNA + H(+)</text>
        <dbReference type="Rhea" id="RHEA:54448"/>
        <dbReference type="Rhea" id="RHEA-COMP:10123"/>
        <dbReference type="Rhea" id="RHEA-COMP:13883"/>
        <dbReference type="ChEBI" id="CHEBI:15377"/>
        <dbReference type="ChEBI" id="CHEBI:15378"/>
        <dbReference type="ChEBI" id="CHEBI:59874"/>
        <dbReference type="ChEBI" id="CHEBI:78442"/>
        <dbReference type="ChEBI" id="CHEBI:138191"/>
        <dbReference type="EC" id="3.1.1.29"/>
    </reaction>
</comment>
<comment type="subunit">
    <text evidence="1">Monomer.</text>
</comment>
<comment type="subcellular location">
    <subcellularLocation>
        <location evidence="1">Cytoplasm</location>
    </subcellularLocation>
</comment>
<comment type="similarity">
    <text evidence="1">Belongs to the PTH family.</text>
</comment>
<name>PTH_ACTPJ</name>
<keyword id="KW-0963">Cytoplasm</keyword>
<keyword id="KW-0378">Hydrolase</keyword>
<keyword id="KW-0694">RNA-binding</keyword>
<keyword id="KW-0820">tRNA-binding</keyword>
<organism>
    <name type="scientific">Actinobacillus pleuropneumoniae serotype 3 (strain JL03)</name>
    <dbReference type="NCBI Taxonomy" id="434271"/>
    <lineage>
        <taxon>Bacteria</taxon>
        <taxon>Pseudomonadati</taxon>
        <taxon>Pseudomonadota</taxon>
        <taxon>Gammaproteobacteria</taxon>
        <taxon>Pasteurellales</taxon>
        <taxon>Pasteurellaceae</taxon>
        <taxon>Actinobacillus</taxon>
    </lineage>
</organism>
<evidence type="ECO:0000255" key="1">
    <source>
        <dbReference type="HAMAP-Rule" id="MF_00083"/>
    </source>
</evidence>
<proteinExistence type="inferred from homology"/>
<gene>
    <name evidence="1" type="primary">pth</name>
    <name type="ordered locus">APJL_0034</name>
</gene>
<feature type="chain" id="PRO_1000092902" description="Peptidyl-tRNA hydrolase">
    <location>
        <begin position="1"/>
        <end position="194"/>
    </location>
</feature>
<feature type="active site" description="Proton acceptor" evidence="1">
    <location>
        <position position="22"/>
    </location>
</feature>
<feature type="binding site" evidence="1">
    <location>
        <position position="17"/>
    </location>
    <ligand>
        <name>tRNA</name>
        <dbReference type="ChEBI" id="CHEBI:17843"/>
    </ligand>
</feature>
<feature type="binding site" evidence="1">
    <location>
        <position position="68"/>
    </location>
    <ligand>
        <name>tRNA</name>
        <dbReference type="ChEBI" id="CHEBI:17843"/>
    </ligand>
</feature>
<feature type="binding site" evidence="1">
    <location>
        <position position="70"/>
    </location>
    <ligand>
        <name>tRNA</name>
        <dbReference type="ChEBI" id="CHEBI:17843"/>
    </ligand>
</feature>
<feature type="binding site" evidence="1">
    <location>
        <position position="116"/>
    </location>
    <ligand>
        <name>tRNA</name>
        <dbReference type="ChEBI" id="CHEBI:17843"/>
    </ligand>
</feature>
<feature type="site" description="Discriminates between blocked and unblocked aminoacyl-tRNA" evidence="1">
    <location>
        <position position="12"/>
    </location>
</feature>
<feature type="site" description="Stabilizes the basic form of H active site to accept a proton" evidence="1">
    <location>
        <position position="95"/>
    </location>
</feature>